<evidence type="ECO:0000250" key="1">
    <source>
        <dbReference type="UniProtKB" id="O48814"/>
    </source>
</evidence>
<evidence type="ECO:0000255" key="2"/>
<evidence type="ECO:0000255" key="3">
    <source>
        <dbReference type="PROSITE-ProRule" id="PRU00159"/>
    </source>
</evidence>
<evidence type="ECO:0000255" key="4">
    <source>
        <dbReference type="PROSITE-ProRule" id="PRU10027"/>
    </source>
</evidence>
<evidence type="ECO:0000305" key="5"/>
<comment type="catalytic activity">
    <reaction>
        <text>L-seryl-[protein] + ATP = O-phospho-L-seryl-[protein] + ADP + H(+)</text>
        <dbReference type="Rhea" id="RHEA:17989"/>
        <dbReference type="Rhea" id="RHEA-COMP:9863"/>
        <dbReference type="Rhea" id="RHEA-COMP:11604"/>
        <dbReference type="ChEBI" id="CHEBI:15378"/>
        <dbReference type="ChEBI" id="CHEBI:29999"/>
        <dbReference type="ChEBI" id="CHEBI:30616"/>
        <dbReference type="ChEBI" id="CHEBI:83421"/>
        <dbReference type="ChEBI" id="CHEBI:456216"/>
        <dbReference type="EC" id="2.7.11.1"/>
    </reaction>
</comment>
<comment type="catalytic activity">
    <reaction>
        <text>L-threonyl-[protein] + ATP = O-phospho-L-threonyl-[protein] + ADP + H(+)</text>
        <dbReference type="Rhea" id="RHEA:46608"/>
        <dbReference type="Rhea" id="RHEA-COMP:11060"/>
        <dbReference type="Rhea" id="RHEA-COMP:11605"/>
        <dbReference type="ChEBI" id="CHEBI:15378"/>
        <dbReference type="ChEBI" id="CHEBI:30013"/>
        <dbReference type="ChEBI" id="CHEBI:30616"/>
        <dbReference type="ChEBI" id="CHEBI:61977"/>
        <dbReference type="ChEBI" id="CHEBI:456216"/>
        <dbReference type="EC" id="2.7.11.1"/>
    </reaction>
</comment>
<comment type="interaction">
    <interactant intactId="EBI-17070892">
        <id>C0LGI2</id>
    </interactant>
    <interactant intactId="EBI-941096">
        <id>Q9LIG2</id>
        <label>At3g21340</label>
    </interactant>
    <organismsDiffer>false</organismsDiffer>
    <experiments>2</experiments>
</comment>
<comment type="interaction">
    <interactant intactId="EBI-17070892">
        <id>C0LGI2</id>
    </interactant>
    <interactant intactId="EBI-16956175">
        <id>Q9LRT1</id>
        <label>At3g28040</label>
    </interactant>
    <organismsDiffer>false</organismsDiffer>
    <experiments>2</experiments>
</comment>
<comment type="interaction">
    <interactant intactId="EBI-17070892">
        <id>C0LGI2</id>
    </interactant>
    <interactant intactId="EBI-16955556">
        <id>Q8GX94</id>
        <label>MQB2.1</label>
    </interactant>
    <organismsDiffer>false</organismsDiffer>
    <experiments>2</experiments>
</comment>
<comment type="interaction">
    <interactant intactId="EBI-17070892">
        <id>C0LGI2</id>
    </interactant>
    <interactant intactId="EBI-1238200">
        <id>Q9LZV7</id>
        <label>PXC2</label>
    </interactant>
    <organismsDiffer>false</organismsDiffer>
    <experiments>2</experiments>
</comment>
<comment type="subcellular location">
    <subcellularLocation>
        <location evidence="5">Membrane</location>
        <topology evidence="5">Single-pass type I membrane protein</topology>
    </subcellularLocation>
</comment>
<comment type="similarity">
    <text evidence="3">Belongs to the protein kinase superfamily. Ser/Thr protein kinase family.</text>
</comment>
<comment type="sequence caution" evidence="5">
    <conflict type="erroneous gene model prediction">
        <sequence resource="EMBL-CDS" id="AAG28906"/>
    </conflict>
</comment>
<proteinExistence type="evidence at protein level"/>
<sequence>MGLCLAQLAVTCLFLVPFVLSQVTEFVSIDCGCSSNYTDPRTGLGWVSDSEIIKQGKPVTLANTNWNSMQYRRRRDFPTDNKKYCYRLSTKERRRYIVRTTFLYGGLGSEEAYPKFQLYLDATKWATVTIQEVSRVYVEELIVRATSSYVDVCVCCAITGSPFMSTLELRPLNLSMYATDYEDNFFLKVAARVNFGAPNMDALRYPDDPYDRIWESDINKRPNYLVGVAPGTTRINTSKTINTLTREYPPMKVMQTAVVGTQGLISYRLNLEDFPANARAYAYFAEIEELGANETRKFKLVQPYFPDYSNAVVNIAENANGSYTLYEPSYMNVTLDFVLTFSFGKTKDSTQGPLLNAIEISKYLPISVKTDRSDVSVLDAIRSMSPDSDWASEGGDPCIPVLWSWVNCSSTSPPRVTKIALSRKNLRGEIPPGINYMEALTELWLDDNELTGTLPDMSKLVNLKIMHLENNQLSGSLPPYLAHLPNLQELSIENNSFKGKIPSALLKGKVLFKYNNNPELQNEAQRKHFWQILGISIAAVAILLLLVGGSLVLLCALRKTKRADKGDSTETKKKGLVAYSAVRGGHLLDEGVAYFISLPVLEEATDNFSKKVGRGSFGSVYYGRMKDGKEVAVKITADPSSHLNRQFVTEVALLSRIHHRNLVPLIGYCEEADRRILVYEYMHNGSLGDHLHGSSDYKPLDWLTRLQIAQDAAKGLEYLHTGCNPSIIHRDVKSSNILLDINMRAKVSDFGLSRQTEEDLTHVSSVAKGTVGYLDPEYYASQQLTEKSDVYSFGVVLFELLSGKKPVSAEDFGPELNIVHWARSLIRKGDVCGIIDPCIASNVKIESVWRVAEVANQCVEQRGHNRPRMQEVIVAIQDAIRIERGNENGLKSSSSSSSKAQSSRKTLLTSFLELESPDISRNSLAPAAR</sequence>
<feature type="signal peptide" evidence="2">
    <location>
        <begin position="1"/>
        <end position="21"/>
    </location>
</feature>
<feature type="chain" id="PRO_0000387539" description="Probable LRR receptor-like serine/threonine-protein kinase At1g67720">
    <location>
        <begin position="22"/>
        <end position="929"/>
    </location>
</feature>
<feature type="topological domain" description="Extracellular" evidence="2">
    <location>
        <begin position="22"/>
        <end position="531"/>
    </location>
</feature>
<feature type="transmembrane region" description="Helical" evidence="2">
    <location>
        <begin position="532"/>
        <end position="552"/>
    </location>
</feature>
<feature type="topological domain" description="Cytoplasmic" evidence="2">
    <location>
        <begin position="553"/>
        <end position="929"/>
    </location>
</feature>
<feature type="repeat" description="LRR 1">
    <location>
        <begin position="413"/>
        <end position="437"/>
    </location>
</feature>
<feature type="repeat" description="LRR 2">
    <location>
        <begin position="438"/>
        <end position="460"/>
    </location>
</feature>
<feature type="repeat" description="LRR 3">
    <location>
        <begin position="461"/>
        <end position="484"/>
    </location>
</feature>
<feature type="repeat" description="LRR 4">
    <location>
        <begin position="485"/>
        <end position="508"/>
    </location>
</feature>
<feature type="domain" description="Protein kinase" evidence="3">
    <location>
        <begin position="606"/>
        <end position="880"/>
    </location>
</feature>
<feature type="active site" description="Proton acceptor" evidence="3 4">
    <location>
        <position position="731"/>
    </location>
</feature>
<feature type="binding site" evidence="3">
    <location>
        <begin position="612"/>
        <end position="620"/>
    </location>
    <ligand>
        <name>ATP</name>
        <dbReference type="ChEBI" id="CHEBI:30616"/>
    </ligand>
</feature>
<feature type="binding site" evidence="3">
    <location>
        <position position="634"/>
    </location>
    <ligand>
        <name>ATP</name>
        <dbReference type="ChEBI" id="CHEBI:30616"/>
    </ligand>
</feature>
<feature type="modified residue" description="Phosphotyrosine" evidence="1">
    <location>
        <position position="679"/>
    </location>
</feature>
<feature type="modified residue" description="Phosphoserine" evidence="1">
    <location>
        <position position="735"/>
    </location>
</feature>
<feature type="modified residue" description="Phosphoserine" evidence="1">
    <location>
        <position position="764"/>
    </location>
</feature>
<feature type="modified residue" description="Phosphothreonine" evidence="1">
    <location>
        <position position="770"/>
    </location>
</feature>
<feature type="modified residue" description="Phosphotyrosine" evidence="1">
    <location>
        <position position="778"/>
    </location>
</feature>
<feature type="glycosylation site" description="N-linked (GlcNAc...) asparagine" evidence="2">
    <location>
        <position position="36"/>
    </location>
</feature>
<feature type="glycosylation site" description="N-linked (GlcNAc...) asparagine" evidence="2">
    <location>
        <position position="173"/>
    </location>
</feature>
<feature type="glycosylation site" description="N-linked (GlcNAc...) asparagine" evidence="2">
    <location>
        <position position="236"/>
    </location>
</feature>
<feature type="glycosylation site" description="N-linked (GlcNAc...) asparagine" evidence="2">
    <location>
        <position position="293"/>
    </location>
</feature>
<feature type="glycosylation site" description="N-linked (GlcNAc...) asparagine" evidence="2">
    <location>
        <position position="320"/>
    </location>
</feature>
<feature type="glycosylation site" description="N-linked (GlcNAc...) asparagine" evidence="2">
    <location>
        <position position="332"/>
    </location>
</feature>
<feature type="glycosylation site" description="N-linked (GlcNAc...) asparagine" evidence="2">
    <location>
        <position position="407"/>
    </location>
</feature>
<feature type="glycosylation site" description="N-linked (GlcNAc...) asparagine" evidence="2">
    <location>
        <position position="494"/>
    </location>
</feature>
<gene>
    <name type="ordered locus">At1g67720</name>
    <name type="ORF">F12A21.30</name>
</gene>
<reference key="1">
    <citation type="journal article" date="2000" name="Nature">
        <title>Sequence and analysis of chromosome 1 of the plant Arabidopsis thaliana.</title>
        <authorList>
            <person name="Theologis A."/>
            <person name="Ecker J.R."/>
            <person name="Palm C.J."/>
            <person name="Federspiel N.A."/>
            <person name="Kaul S."/>
            <person name="White O."/>
            <person name="Alonso J."/>
            <person name="Altafi H."/>
            <person name="Araujo R."/>
            <person name="Bowman C.L."/>
            <person name="Brooks S.Y."/>
            <person name="Buehler E."/>
            <person name="Chan A."/>
            <person name="Chao Q."/>
            <person name="Chen H."/>
            <person name="Cheuk R.F."/>
            <person name="Chin C.W."/>
            <person name="Chung M.K."/>
            <person name="Conn L."/>
            <person name="Conway A.B."/>
            <person name="Conway A.R."/>
            <person name="Creasy T.H."/>
            <person name="Dewar K."/>
            <person name="Dunn P."/>
            <person name="Etgu P."/>
            <person name="Feldblyum T.V."/>
            <person name="Feng J.-D."/>
            <person name="Fong B."/>
            <person name="Fujii C.Y."/>
            <person name="Gill J.E."/>
            <person name="Goldsmith A.D."/>
            <person name="Haas B."/>
            <person name="Hansen N.F."/>
            <person name="Hughes B."/>
            <person name="Huizar L."/>
            <person name="Hunter J.L."/>
            <person name="Jenkins J."/>
            <person name="Johnson-Hopson C."/>
            <person name="Khan S."/>
            <person name="Khaykin E."/>
            <person name="Kim C.J."/>
            <person name="Koo H.L."/>
            <person name="Kremenetskaia I."/>
            <person name="Kurtz D.B."/>
            <person name="Kwan A."/>
            <person name="Lam B."/>
            <person name="Langin-Hooper S."/>
            <person name="Lee A."/>
            <person name="Lee J.M."/>
            <person name="Lenz C.A."/>
            <person name="Li J.H."/>
            <person name="Li Y.-P."/>
            <person name="Lin X."/>
            <person name="Liu S.X."/>
            <person name="Liu Z.A."/>
            <person name="Luros J.S."/>
            <person name="Maiti R."/>
            <person name="Marziali A."/>
            <person name="Militscher J."/>
            <person name="Miranda M."/>
            <person name="Nguyen M."/>
            <person name="Nierman W.C."/>
            <person name="Osborne B.I."/>
            <person name="Pai G."/>
            <person name="Peterson J."/>
            <person name="Pham P.K."/>
            <person name="Rizzo M."/>
            <person name="Rooney T."/>
            <person name="Rowley D."/>
            <person name="Sakano H."/>
            <person name="Salzberg S.L."/>
            <person name="Schwartz J.R."/>
            <person name="Shinn P."/>
            <person name="Southwick A.M."/>
            <person name="Sun H."/>
            <person name="Tallon L.J."/>
            <person name="Tambunga G."/>
            <person name="Toriumi M.J."/>
            <person name="Town C.D."/>
            <person name="Utterback T."/>
            <person name="Van Aken S."/>
            <person name="Vaysberg M."/>
            <person name="Vysotskaia V.S."/>
            <person name="Walker M."/>
            <person name="Wu D."/>
            <person name="Yu G."/>
            <person name="Fraser C.M."/>
            <person name="Venter J.C."/>
            <person name="Davis R.W."/>
        </authorList>
    </citation>
    <scope>NUCLEOTIDE SEQUENCE [LARGE SCALE GENOMIC DNA]</scope>
    <source>
        <strain>cv. Columbia</strain>
    </source>
</reference>
<reference key="2">
    <citation type="journal article" date="2017" name="Plant J.">
        <title>Araport11: a complete reannotation of the Arabidopsis thaliana reference genome.</title>
        <authorList>
            <person name="Cheng C.Y."/>
            <person name="Krishnakumar V."/>
            <person name="Chan A.P."/>
            <person name="Thibaud-Nissen F."/>
            <person name="Schobel S."/>
            <person name="Town C.D."/>
        </authorList>
    </citation>
    <scope>GENOME REANNOTATION</scope>
    <source>
        <strain>cv. Columbia</strain>
    </source>
</reference>
<reference key="3">
    <citation type="journal article" date="2010" name="BMC Genomics">
        <title>Genome-wide cloning and sequence analysis of leucine-rich repeat receptor-like protein kinase genes in Arabidopsis thaliana.</title>
        <authorList>
            <person name="Gou X."/>
            <person name="He K."/>
            <person name="Yang H."/>
            <person name="Yuan T."/>
            <person name="Lin H."/>
            <person name="Clouse S.D."/>
            <person name="Li J."/>
        </authorList>
    </citation>
    <scope>NUCLEOTIDE SEQUENCE [LARGE SCALE MRNA]</scope>
    <source>
        <strain>cv. Columbia</strain>
    </source>
</reference>
<keyword id="KW-0067">ATP-binding</keyword>
<keyword id="KW-0325">Glycoprotein</keyword>
<keyword id="KW-0418">Kinase</keyword>
<keyword id="KW-0433">Leucine-rich repeat</keyword>
<keyword id="KW-0472">Membrane</keyword>
<keyword id="KW-0547">Nucleotide-binding</keyword>
<keyword id="KW-0597">Phosphoprotein</keyword>
<keyword id="KW-0675">Receptor</keyword>
<keyword id="KW-1185">Reference proteome</keyword>
<keyword id="KW-0677">Repeat</keyword>
<keyword id="KW-0723">Serine/threonine-protein kinase</keyword>
<keyword id="KW-0732">Signal</keyword>
<keyword id="KW-0808">Transferase</keyword>
<keyword id="KW-0812">Transmembrane</keyword>
<keyword id="KW-1133">Transmembrane helix</keyword>
<organism>
    <name type="scientific">Arabidopsis thaliana</name>
    <name type="common">Mouse-ear cress</name>
    <dbReference type="NCBI Taxonomy" id="3702"/>
    <lineage>
        <taxon>Eukaryota</taxon>
        <taxon>Viridiplantae</taxon>
        <taxon>Streptophyta</taxon>
        <taxon>Embryophyta</taxon>
        <taxon>Tracheophyta</taxon>
        <taxon>Spermatophyta</taxon>
        <taxon>Magnoliopsida</taxon>
        <taxon>eudicotyledons</taxon>
        <taxon>Gunneridae</taxon>
        <taxon>Pentapetalae</taxon>
        <taxon>rosids</taxon>
        <taxon>malvids</taxon>
        <taxon>Brassicales</taxon>
        <taxon>Brassicaceae</taxon>
        <taxon>Camelineae</taxon>
        <taxon>Arabidopsis</taxon>
    </lineage>
</organism>
<protein>
    <recommendedName>
        <fullName>Probable LRR receptor-like serine/threonine-protein kinase At1g67720</fullName>
        <ecNumber>2.7.11.1</ecNumber>
    </recommendedName>
</protein>
<name>Y1677_ARATH</name>
<accession>C0LGI2</accession>
<accession>Q9FXD7</accession>
<dbReference type="EC" id="2.7.11.1"/>
<dbReference type="EMBL" id="AC008113">
    <property type="protein sequence ID" value="AAG28906.1"/>
    <property type="status" value="ALT_SEQ"/>
    <property type="molecule type" value="Genomic_DNA"/>
</dbReference>
<dbReference type="EMBL" id="CP002684">
    <property type="protein sequence ID" value="AEE34687.1"/>
    <property type="molecule type" value="Genomic_DNA"/>
</dbReference>
<dbReference type="EMBL" id="FJ708672">
    <property type="protein sequence ID" value="ACN59267.1"/>
    <property type="molecule type" value="mRNA"/>
</dbReference>
<dbReference type="RefSeq" id="NP_564904.1">
    <property type="nucleotide sequence ID" value="NM_105440.2"/>
</dbReference>
<dbReference type="SMR" id="C0LGI2"/>
<dbReference type="BioGRID" id="28318">
    <property type="interactions" value="30"/>
</dbReference>
<dbReference type="FunCoup" id="C0LGI2">
    <property type="interactions" value="957"/>
</dbReference>
<dbReference type="IntAct" id="C0LGI2">
    <property type="interactions" value="30"/>
</dbReference>
<dbReference type="STRING" id="3702.C0LGI2"/>
<dbReference type="GlyGen" id="C0LGI2">
    <property type="glycosylation" value="8 sites"/>
</dbReference>
<dbReference type="iPTMnet" id="C0LGI2"/>
<dbReference type="PaxDb" id="3702-AT1G67720.1"/>
<dbReference type="ProteomicsDB" id="243033"/>
<dbReference type="EnsemblPlants" id="AT1G67720.1">
    <property type="protein sequence ID" value="AT1G67720.1"/>
    <property type="gene ID" value="AT1G67720"/>
</dbReference>
<dbReference type="GeneID" id="843097"/>
<dbReference type="Gramene" id="AT1G67720.1">
    <property type="protein sequence ID" value="AT1G67720.1"/>
    <property type="gene ID" value="AT1G67720"/>
</dbReference>
<dbReference type="KEGG" id="ath:AT1G67720"/>
<dbReference type="Araport" id="AT1G67720"/>
<dbReference type="TAIR" id="AT1G67720"/>
<dbReference type="eggNOG" id="ENOG502QSBF">
    <property type="taxonomic scope" value="Eukaryota"/>
</dbReference>
<dbReference type="HOGENOM" id="CLU_000288_41_3_1"/>
<dbReference type="InParanoid" id="C0LGI2"/>
<dbReference type="OMA" id="NIVYWAR"/>
<dbReference type="PhylomeDB" id="C0LGI2"/>
<dbReference type="PRO" id="PR:C0LGI2"/>
<dbReference type="Proteomes" id="UP000006548">
    <property type="component" value="Chromosome 1"/>
</dbReference>
<dbReference type="ExpressionAtlas" id="C0LGI2">
    <property type="expression patterns" value="baseline and differential"/>
</dbReference>
<dbReference type="GO" id="GO:0016020">
    <property type="term" value="C:membrane"/>
    <property type="evidence" value="ECO:0007669"/>
    <property type="project" value="UniProtKB-SubCell"/>
</dbReference>
<dbReference type="GO" id="GO:0005524">
    <property type="term" value="F:ATP binding"/>
    <property type="evidence" value="ECO:0007669"/>
    <property type="project" value="UniProtKB-KW"/>
</dbReference>
<dbReference type="GO" id="GO:0106310">
    <property type="term" value="F:protein serine kinase activity"/>
    <property type="evidence" value="ECO:0007669"/>
    <property type="project" value="RHEA"/>
</dbReference>
<dbReference type="GO" id="GO:0004674">
    <property type="term" value="F:protein serine/threonine kinase activity"/>
    <property type="evidence" value="ECO:0007669"/>
    <property type="project" value="UniProtKB-KW"/>
</dbReference>
<dbReference type="CDD" id="cd14066">
    <property type="entry name" value="STKc_IRAK"/>
    <property type="match status" value="1"/>
</dbReference>
<dbReference type="FunFam" id="3.80.10.10:FF:000383">
    <property type="entry name" value="Leucine-rich repeat receptor protein kinase EMS1"/>
    <property type="match status" value="1"/>
</dbReference>
<dbReference type="FunFam" id="1.10.510.10:FF:000146">
    <property type="entry name" value="LRR receptor-like serine/threonine-protein kinase IOS1"/>
    <property type="match status" value="1"/>
</dbReference>
<dbReference type="Gene3D" id="3.30.200.20">
    <property type="entry name" value="Phosphorylase Kinase, domain 1"/>
    <property type="match status" value="1"/>
</dbReference>
<dbReference type="Gene3D" id="3.80.10.10">
    <property type="entry name" value="Ribonuclease Inhibitor"/>
    <property type="match status" value="1"/>
</dbReference>
<dbReference type="Gene3D" id="1.10.510.10">
    <property type="entry name" value="Transferase(Phosphotransferase) domain 1"/>
    <property type="match status" value="1"/>
</dbReference>
<dbReference type="InterPro" id="IPR011009">
    <property type="entry name" value="Kinase-like_dom_sf"/>
</dbReference>
<dbReference type="InterPro" id="IPR001611">
    <property type="entry name" value="Leu-rich_rpt"/>
</dbReference>
<dbReference type="InterPro" id="IPR032675">
    <property type="entry name" value="LRR_dom_sf"/>
</dbReference>
<dbReference type="InterPro" id="IPR024788">
    <property type="entry name" value="Malectin-like_Carb-bd_dom"/>
</dbReference>
<dbReference type="InterPro" id="IPR000719">
    <property type="entry name" value="Prot_kinase_dom"/>
</dbReference>
<dbReference type="InterPro" id="IPR017441">
    <property type="entry name" value="Protein_kinase_ATP_BS"/>
</dbReference>
<dbReference type="InterPro" id="IPR001245">
    <property type="entry name" value="Ser-Thr/Tyr_kinase_cat_dom"/>
</dbReference>
<dbReference type="InterPro" id="IPR008271">
    <property type="entry name" value="Ser/Thr_kinase_AS"/>
</dbReference>
<dbReference type="PANTHER" id="PTHR45631">
    <property type="entry name" value="OS07G0107800 PROTEIN-RELATED"/>
    <property type="match status" value="1"/>
</dbReference>
<dbReference type="PANTHER" id="PTHR45631:SF19">
    <property type="entry name" value="PROTEIN KINASE DOMAIN-CONTAINING PROTEIN"/>
    <property type="match status" value="1"/>
</dbReference>
<dbReference type="Pfam" id="PF00560">
    <property type="entry name" value="LRR_1"/>
    <property type="match status" value="2"/>
</dbReference>
<dbReference type="Pfam" id="PF12819">
    <property type="entry name" value="Malectin_like"/>
    <property type="match status" value="1"/>
</dbReference>
<dbReference type="Pfam" id="PF07714">
    <property type="entry name" value="PK_Tyr_Ser-Thr"/>
    <property type="match status" value="1"/>
</dbReference>
<dbReference type="SMART" id="SM00220">
    <property type="entry name" value="S_TKc"/>
    <property type="match status" value="1"/>
</dbReference>
<dbReference type="SUPFAM" id="SSF52058">
    <property type="entry name" value="L domain-like"/>
    <property type="match status" value="1"/>
</dbReference>
<dbReference type="SUPFAM" id="SSF56112">
    <property type="entry name" value="Protein kinase-like (PK-like)"/>
    <property type="match status" value="1"/>
</dbReference>
<dbReference type="PROSITE" id="PS00107">
    <property type="entry name" value="PROTEIN_KINASE_ATP"/>
    <property type="match status" value="1"/>
</dbReference>
<dbReference type="PROSITE" id="PS50011">
    <property type="entry name" value="PROTEIN_KINASE_DOM"/>
    <property type="match status" value="1"/>
</dbReference>
<dbReference type="PROSITE" id="PS00108">
    <property type="entry name" value="PROTEIN_KINASE_ST"/>
    <property type="match status" value="1"/>
</dbReference>